<protein>
    <recommendedName>
        <fullName evidence="1">Endoribonuclease YbeY</fullName>
        <ecNumber evidence="1">3.1.-.-</ecNumber>
    </recommendedName>
</protein>
<evidence type="ECO:0000255" key="1">
    <source>
        <dbReference type="HAMAP-Rule" id="MF_00009"/>
    </source>
</evidence>
<sequence>MKRAKKYPFLTLQRQRFHLNFENASSAAGIPAERDFYRWAWSALKNEYLRADIGLILLDEEEARAYNRDYRGKDYATNVLSFALNEGEILPCQVSERLYGDLIICPQVVLKEAAEQGKTPERHFAHLTIHGTLHLMGYDHIKDDEAEIMEAEEIRLMRAAGYPNPYREDGH</sequence>
<proteinExistence type="inferred from homology"/>
<feature type="chain" id="PRO_0000284253" description="Endoribonuclease YbeY">
    <location>
        <begin position="1"/>
        <end position="171"/>
    </location>
</feature>
<feature type="binding site" evidence="1">
    <location>
        <position position="130"/>
    </location>
    <ligand>
        <name>Zn(2+)</name>
        <dbReference type="ChEBI" id="CHEBI:29105"/>
        <note>catalytic</note>
    </ligand>
</feature>
<feature type="binding site" evidence="1">
    <location>
        <position position="134"/>
    </location>
    <ligand>
        <name>Zn(2+)</name>
        <dbReference type="ChEBI" id="CHEBI:29105"/>
        <note>catalytic</note>
    </ligand>
</feature>
<feature type="binding site" evidence="1">
    <location>
        <position position="140"/>
    </location>
    <ligand>
        <name>Zn(2+)</name>
        <dbReference type="ChEBI" id="CHEBI:29105"/>
        <note>catalytic</note>
    </ligand>
</feature>
<gene>
    <name evidence="1" type="primary">ybeY</name>
    <name type="ordered locus">NGO_0145</name>
</gene>
<name>YBEY_NEIG1</name>
<dbReference type="EC" id="3.1.-.-" evidence="1"/>
<dbReference type="EMBL" id="AE004969">
    <property type="protein sequence ID" value="AAW88903.2"/>
    <property type="molecule type" value="Genomic_DNA"/>
</dbReference>
<dbReference type="RefSeq" id="WP_003694796.1">
    <property type="nucleotide sequence ID" value="NC_002946.2"/>
</dbReference>
<dbReference type="RefSeq" id="YP_207315.2">
    <property type="nucleotide sequence ID" value="NC_002946.2"/>
</dbReference>
<dbReference type="SMR" id="Q5FA84"/>
<dbReference type="STRING" id="242231.NGO_0145"/>
<dbReference type="KEGG" id="ngo:NGO_0145"/>
<dbReference type="PATRIC" id="fig|242231.10.peg.184"/>
<dbReference type="HOGENOM" id="CLU_106710_0_1_4"/>
<dbReference type="Proteomes" id="UP000000535">
    <property type="component" value="Chromosome"/>
</dbReference>
<dbReference type="GO" id="GO:0005737">
    <property type="term" value="C:cytoplasm"/>
    <property type="evidence" value="ECO:0007669"/>
    <property type="project" value="UniProtKB-SubCell"/>
</dbReference>
<dbReference type="GO" id="GO:0004222">
    <property type="term" value="F:metalloendopeptidase activity"/>
    <property type="evidence" value="ECO:0007669"/>
    <property type="project" value="InterPro"/>
</dbReference>
<dbReference type="GO" id="GO:0004521">
    <property type="term" value="F:RNA endonuclease activity"/>
    <property type="evidence" value="ECO:0007669"/>
    <property type="project" value="UniProtKB-UniRule"/>
</dbReference>
<dbReference type="GO" id="GO:0008270">
    <property type="term" value="F:zinc ion binding"/>
    <property type="evidence" value="ECO:0007669"/>
    <property type="project" value="UniProtKB-UniRule"/>
</dbReference>
<dbReference type="GO" id="GO:0006364">
    <property type="term" value="P:rRNA processing"/>
    <property type="evidence" value="ECO:0007669"/>
    <property type="project" value="UniProtKB-UniRule"/>
</dbReference>
<dbReference type="Gene3D" id="3.40.390.30">
    <property type="entry name" value="Metalloproteases ('zincins'), catalytic domain"/>
    <property type="match status" value="1"/>
</dbReference>
<dbReference type="HAMAP" id="MF_00009">
    <property type="entry name" value="Endoribonucl_YbeY"/>
    <property type="match status" value="1"/>
</dbReference>
<dbReference type="InterPro" id="IPR023091">
    <property type="entry name" value="MetalPrtase_cat_dom_sf_prd"/>
</dbReference>
<dbReference type="InterPro" id="IPR002036">
    <property type="entry name" value="YbeY"/>
</dbReference>
<dbReference type="InterPro" id="IPR020549">
    <property type="entry name" value="YbeY_CS"/>
</dbReference>
<dbReference type="NCBIfam" id="TIGR00043">
    <property type="entry name" value="rRNA maturation RNase YbeY"/>
    <property type="match status" value="1"/>
</dbReference>
<dbReference type="PANTHER" id="PTHR46986">
    <property type="entry name" value="ENDORIBONUCLEASE YBEY, CHLOROPLASTIC"/>
    <property type="match status" value="1"/>
</dbReference>
<dbReference type="PANTHER" id="PTHR46986:SF1">
    <property type="entry name" value="ENDORIBONUCLEASE YBEY, CHLOROPLASTIC"/>
    <property type="match status" value="1"/>
</dbReference>
<dbReference type="Pfam" id="PF02130">
    <property type="entry name" value="YbeY"/>
    <property type="match status" value="1"/>
</dbReference>
<dbReference type="SUPFAM" id="SSF55486">
    <property type="entry name" value="Metalloproteases ('zincins'), catalytic domain"/>
    <property type="match status" value="1"/>
</dbReference>
<dbReference type="PROSITE" id="PS01306">
    <property type="entry name" value="UPF0054"/>
    <property type="match status" value="1"/>
</dbReference>
<organism>
    <name type="scientific">Neisseria gonorrhoeae (strain ATCC 700825 / FA 1090)</name>
    <dbReference type="NCBI Taxonomy" id="242231"/>
    <lineage>
        <taxon>Bacteria</taxon>
        <taxon>Pseudomonadati</taxon>
        <taxon>Pseudomonadota</taxon>
        <taxon>Betaproteobacteria</taxon>
        <taxon>Neisseriales</taxon>
        <taxon>Neisseriaceae</taxon>
        <taxon>Neisseria</taxon>
    </lineage>
</organism>
<reference key="1">
    <citation type="submission" date="2003-03" db="EMBL/GenBank/DDBJ databases">
        <title>The complete genome sequence of Neisseria gonorrhoeae.</title>
        <authorList>
            <person name="Lewis L.A."/>
            <person name="Gillaspy A.F."/>
            <person name="McLaughlin R.E."/>
            <person name="Gipson M."/>
            <person name="Ducey T.F."/>
            <person name="Ownbey T."/>
            <person name="Hartman K."/>
            <person name="Nydick C."/>
            <person name="Carson M.B."/>
            <person name="Vaughn J."/>
            <person name="Thomson C."/>
            <person name="Song L."/>
            <person name="Lin S."/>
            <person name="Yuan X."/>
            <person name="Najar F."/>
            <person name="Zhan M."/>
            <person name="Ren Q."/>
            <person name="Zhu H."/>
            <person name="Qi S."/>
            <person name="Kenton S.M."/>
            <person name="Lai H."/>
            <person name="White J.D."/>
            <person name="Clifton S."/>
            <person name="Roe B.A."/>
            <person name="Dyer D.W."/>
        </authorList>
    </citation>
    <scope>NUCLEOTIDE SEQUENCE [LARGE SCALE GENOMIC DNA]</scope>
    <source>
        <strain>ATCC 700825 / FA 1090</strain>
    </source>
</reference>
<accession>Q5FA84</accession>
<keyword id="KW-0963">Cytoplasm</keyword>
<keyword id="KW-0255">Endonuclease</keyword>
<keyword id="KW-0378">Hydrolase</keyword>
<keyword id="KW-0479">Metal-binding</keyword>
<keyword id="KW-0540">Nuclease</keyword>
<keyword id="KW-1185">Reference proteome</keyword>
<keyword id="KW-0690">Ribosome biogenesis</keyword>
<keyword id="KW-0698">rRNA processing</keyword>
<keyword id="KW-0862">Zinc</keyword>
<comment type="function">
    <text evidence="1">Single strand-specific metallo-endoribonuclease involved in late-stage 70S ribosome quality control and in maturation of the 3' terminus of the 16S rRNA.</text>
</comment>
<comment type="cofactor">
    <cofactor evidence="1">
        <name>Zn(2+)</name>
        <dbReference type="ChEBI" id="CHEBI:29105"/>
    </cofactor>
    <text evidence="1">Binds 1 zinc ion.</text>
</comment>
<comment type="subcellular location">
    <subcellularLocation>
        <location evidence="1">Cytoplasm</location>
    </subcellularLocation>
</comment>
<comment type="similarity">
    <text evidence="1">Belongs to the endoribonuclease YbeY family.</text>
</comment>